<keyword id="KW-1185">Reference proteome</keyword>
<keyword id="KW-0687">Ribonucleoprotein</keyword>
<keyword id="KW-0689">Ribosomal protein</keyword>
<keyword id="KW-0694">RNA-binding</keyword>
<keyword id="KW-0699">rRNA-binding</keyword>
<comment type="function">
    <text evidence="1">This is one of the proteins that binds to the 5S RNA in the ribosome where it forms part of the central protuberance.</text>
</comment>
<comment type="subunit">
    <text evidence="1">Part of the 50S ribosomal subunit; part of the 5S rRNA/L5/L18/L25 subcomplex. Contacts the 5S rRNA. Binds to the 5S rRNA independently of L5 and L18.</text>
</comment>
<comment type="similarity">
    <text evidence="1">Belongs to the bacterial ribosomal protein bL25 family. CTC subfamily.</text>
</comment>
<evidence type="ECO:0000255" key="1">
    <source>
        <dbReference type="HAMAP-Rule" id="MF_01334"/>
    </source>
</evidence>
<evidence type="ECO:0000305" key="2"/>
<reference key="1">
    <citation type="journal article" date="2006" name="J. Bacteriol.">
        <title>Comparison of the genome sequence of the poultry pathogen Bordetella avium with those of B. bronchiseptica, B. pertussis, and B. parapertussis reveals extensive diversity in surface structures associated with host interaction.</title>
        <authorList>
            <person name="Sebaihia M."/>
            <person name="Preston A."/>
            <person name="Maskell D.J."/>
            <person name="Kuzmiak H."/>
            <person name="Connell T.D."/>
            <person name="King N.D."/>
            <person name="Orndorff P.E."/>
            <person name="Miyamoto D.M."/>
            <person name="Thomson N.R."/>
            <person name="Harris D."/>
            <person name="Goble A."/>
            <person name="Lord A."/>
            <person name="Murphy L."/>
            <person name="Quail M.A."/>
            <person name="Rutter S."/>
            <person name="Squares R."/>
            <person name="Squares S."/>
            <person name="Woodward J."/>
            <person name="Parkhill J."/>
            <person name="Temple L.M."/>
        </authorList>
    </citation>
    <scope>NUCLEOTIDE SEQUENCE [LARGE SCALE GENOMIC DNA]</scope>
    <source>
        <strain>197N</strain>
    </source>
</reference>
<gene>
    <name evidence="1" type="primary">rplY</name>
    <name evidence="1" type="synonym">ctc</name>
    <name type="ordered locus">BAV0538</name>
</gene>
<proteinExistence type="inferred from homology"/>
<dbReference type="EMBL" id="AM167904">
    <property type="protein sequence ID" value="CAJ48143.1"/>
    <property type="molecule type" value="Genomic_DNA"/>
</dbReference>
<dbReference type="RefSeq" id="WP_012416234.1">
    <property type="nucleotide sequence ID" value="NC_010645.1"/>
</dbReference>
<dbReference type="SMR" id="Q2KYA2"/>
<dbReference type="STRING" id="360910.BAV0538"/>
<dbReference type="GeneID" id="92936282"/>
<dbReference type="KEGG" id="bav:BAV0538"/>
<dbReference type="eggNOG" id="COG1825">
    <property type="taxonomic scope" value="Bacteria"/>
</dbReference>
<dbReference type="HOGENOM" id="CLU_075939_0_1_4"/>
<dbReference type="OrthoDB" id="9806411at2"/>
<dbReference type="Proteomes" id="UP000001977">
    <property type="component" value="Chromosome"/>
</dbReference>
<dbReference type="GO" id="GO:0022625">
    <property type="term" value="C:cytosolic large ribosomal subunit"/>
    <property type="evidence" value="ECO:0007669"/>
    <property type="project" value="TreeGrafter"/>
</dbReference>
<dbReference type="GO" id="GO:0008097">
    <property type="term" value="F:5S rRNA binding"/>
    <property type="evidence" value="ECO:0007669"/>
    <property type="project" value="InterPro"/>
</dbReference>
<dbReference type="GO" id="GO:0003735">
    <property type="term" value="F:structural constituent of ribosome"/>
    <property type="evidence" value="ECO:0007669"/>
    <property type="project" value="InterPro"/>
</dbReference>
<dbReference type="GO" id="GO:0006412">
    <property type="term" value="P:translation"/>
    <property type="evidence" value="ECO:0007669"/>
    <property type="project" value="UniProtKB-UniRule"/>
</dbReference>
<dbReference type="CDD" id="cd00495">
    <property type="entry name" value="Ribosomal_L25_TL5_CTC"/>
    <property type="match status" value="1"/>
</dbReference>
<dbReference type="Gene3D" id="2.170.120.20">
    <property type="entry name" value="Ribosomal protein L25, beta domain"/>
    <property type="match status" value="1"/>
</dbReference>
<dbReference type="Gene3D" id="2.40.240.10">
    <property type="entry name" value="Ribosomal Protein L25, Chain P"/>
    <property type="match status" value="1"/>
</dbReference>
<dbReference type="HAMAP" id="MF_01336">
    <property type="entry name" value="Ribosomal_bL25"/>
    <property type="match status" value="1"/>
</dbReference>
<dbReference type="HAMAP" id="MF_01334">
    <property type="entry name" value="Ribosomal_bL25_CTC"/>
    <property type="match status" value="1"/>
</dbReference>
<dbReference type="InterPro" id="IPR020056">
    <property type="entry name" value="Rbsml_bL25/Gln-tRNA_synth_N"/>
</dbReference>
<dbReference type="InterPro" id="IPR011035">
    <property type="entry name" value="Ribosomal_bL25/Gln-tRNA_synth"/>
</dbReference>
<dbReference type="InterPro" id="IPR020057">
    <property type="entry name" value="Ribosomal_bL25_b-dom"/>
</dbReference>
<dbReference type="InterPro" id="IPR037121">
    <property type="entry name" value="Ribosomal_bL25_C"/>
</dbReference>
<dbReference type="InterPro" id="IPR001021">
    <property type="entry name" value="Ribosomal_bL25_long"/>
</dbReference>
<dbReference type="InterPro" id="IPR020055">
    <property type="entry name" value="Ribosomal_bL25_short"/>
</dbReference>
<dbReference type="InterPro" id="IPR029751">
    <property type="entry name" value="Ribosomal_L25_dom"/>
</dbReference>
<dbReference type="InterPro" id="IPR020930">
    <property type="entry name" value="Ribosomal_uL5_bac-type"/>
</dbReference>
<dbReference type="NCBIfam" id="TIGR00731">
    <property type="entry name" value="bL25_bact_ctc"/>
    <property type="match status" value="1"/>
</dbReference>
<dbReference type="NCBIfam" id="NF004128">
    <property type="entry name" value="PRK05618.1-2"/>
    <property type="match status" value="1"/>
</dbReference>
<dbReference type="NCBIfam" id="NF004130">
    <property type="entry name" value="PRK05618.1-5"/>
    <property type="match status" value="1"/>
</dbReference>
<dbReference type="NCBIfam" id="NF004612">
    <property type="entry name" value="PRK05943.1"/>
    <property type="match status" value="1"/>
</dbReference>
<dbReference type="PANTHER" id="PTHR33284">
    <property type="entry name" value="RIBOSOMAL PROTEIN L25/GLN-TRNA SYNTHETASE, ANTI-CODON-BINDING DOMAIN-CONTAINING PROTEIN"/>
    <property type="match status" value="1"/>
</dbReference>
<dbReference type="PANTHER" id="PTHR33284:SF1">
    <property type="entry name" value="RIBOSOMAL PROTEIN L25_GLN-TRNA SYNTHETASE, ANTI-CODON-BINDING DOMAIN-CONTAINING PROTEIN"/>
    <property type="match status" value="1"/>
</dbReference>
<dbReference type="Pfam" id="PF01386">
    <property type="entry name" value="Ribosomal_L25p"/>
    <property type="match status" value="1"/>
</dbReference>
<dbReference type="Pfam" id="PF14693">
    <property type="entry name" value="Ribosomal_TL5_C"/>
    <property type="match status" value="1"/>
</dbReference>
<dbReference type="SUPFAM" id="SSF50715">
    <property type="entry name" value="Ribosomal protein L25-like"/>
    <property type="match status" value="1"/>
</dbReference>
<feature type="chain" id="PRO_0000244193" description="Large ribosomal subunit protein bL25">
    <location>
        <begin position="1"/>
        <end position="198"/>
    </location>
</feature>
<protein>
    <recommendedName>
        <fullName evidence="1">Large ribosomal subunit protein bL25</fullName>
    </recommendedName>
    <alternativeName>
        <fullName evidence="2">50S ribosomal protein L25</fullName>
    </alternativeName>
    <alternativeName>
        <fullName evidence="1">General stress protein CTC</fullName>
    </alternativeName>
</protein>
<organism>
    <name type="scientific">Bordetella avium (strain 197N)</name>
    <dbReference type="NCBI Taxonomy" id="360910"/>
    <lineage>
        <taxon>Bacteria</taxon>
        <taxon>Pseudomonadati</taxon>
        <taxon>Pseudomonadota</taxon>
        <taxon>Betaproteobacteria</taxon>
        <taxon>Burkholderiales</taxon>
        <taxon>Alcaligenaceae</taxon>
        <taxon>Bordetella</taxon>
    </lineage>
</organism>
<name>RL25_BORA1</name>
<sequence>MKFNATLRSVQGTSASRRLRRAGRVPAIVYGGTAAPLNIELDHNEIFHALRKEQFHASILTMALEGGANEQVLLRSVQWHPFKQQVLHVDFQRVDANQALHTKVPLHFVNAETSPAVKLSGAIISHVVTEVEVTCLPQSLPQFIEVDLGNLLGGGSIHQKDIVLPKGVTFTHPNDEQVIVSAVVKGGAADDAEEAPAA</sequence>
<accession>Q2KYA2</accession>